<feature type="chain" id="PRO_0000219703" description="Photosystem II reaction center protein L">
    <location>
        <begin position="1"/>
        <end position="38"/>
    </location>
</feature>
<feature type="transmembrane region" description="Helical" evidence="1">
    <location>
        <begin position="17"/>
        <end position="37"/>
    </location>
</feature>
<name>PSBL_CUSEU</name>
<comment type="function">
    <text evidence="1">One of the components of the core complex of photosystem II (PSII). PSII is a light-driven water:plastoquinone oxidoreductase that uses light energy to abstract electrons from H(2)O, generating O(2) and a proton gradient subsequently used for ATP formation. It consists of a core antenna complex that captures photons, and an electron transfer chain that converts photonic excitation into a charge separation. This subunit is found at the monomer-monomer interface and is required for correct PSII assembly and/or dimerization.</text>
</comment>
<comment type="subunit">
    <text evidence="1">PSII is composed of 1 copy each of membrane proteins PsbA, PsbB, PsbC, PsbD, PsbE, PsbF, PsbH, PsbI, PsbJ, PsbK, PsbL, PsbM, PsbT, PsbX, PsbY, PsbZ, Psb30/Ycf12, at least 3 peripheral proteins of the oxygen-evolving complex and a large number of cofactors. It forms dimeric complexes.</text>
</comment>
<comment type="subcellular location">
    <subcellularLocation>
        <location evidence="2">Plastid membrane</location>
        <topology evidence="1">Single-pass membrane protein</topology>
    </subcellularLocation>
</comment>
<comment type="similarity">
    <text evidence="1">Belongs to the PsbL family.</text>
</comment>
<comment type="caution">
    <text evidence="2">This organism being non-photosynthetic, the role of this protein is uncertain.</text>
</comment>
<accession>Q7H826</accession>
<keyword id="KW-0472">Membrane</keyword>
<keyword id="KW-0934">Plastid</keyword>
<keyword id="KW-0812">Transmembrane</keyword>
<keyword id="KW-1133">Transmembrane helix</keyword>
<evidence type="ECO:0000255" key="1">
    <source>
        <dbReference type="HAMAP-Rule" id="MF_01317"/>
    </source>
</evidence>
<evidence type="ECO:0000305" key="2"/>
<dbReference type="EMBL" id="AY100951">
    <property type="protein sequence ID" value="AAM55923.1"/>
    <property type="molecule type" value="Genomic_DNA"/>
</dbReference>
<dbReference type="RefSeq" id="YP_010621281.1">
    <property type="nucleotide sequence ID" value="NC_070193.1"/>
</dbReference>
<dbReference type="SMR" id="Q7H826"/>
<dbReference type="GeneID" id="77663206"/>
<dbReference type="GO" id="GO:0009539">
    <property type="term" value="C:photosystem II reaction center"/>
    <property type="evidence" value="ECO:0007669"/>
    <property type="project" value="InterPro"/>
</dbReference>
<dbReference type="GO" id="GO:0042170">
    <property type="term" value="C:plastid membrane"/>
    <property type="evidence" value="ECO:0007669"/>
    <property type="project" value="UniProtKB-SubCell"/>
</dbReference>
<dbReference type="GO" id="GO:0042651">
    <property type="term" value="C:thylakoid membrane"/>
    <property type="evidence" value="ECO:0007669"/>
    <property type="project" value="UniProtKB-UniRule"/>
</dbReference>
<dbReference type="HAMAP" id="MF_01317">
    <property type="entry name" value="PSII_PsbL"/>
    <property type="match status" value="1"/>
</dbReference>
<dbReference type="InterPro" id="IPR003372">
    <property type="entry name" value="PSII_PsbL"/>
</dbReference>
<dbReference type="InterPro" id="IPR037266">
    <property type="entry name" value="PSII_PsbL_sf"/>
</dbReference>
<dbReference type="NCBIfam" id="NF001972">
    <property type="entry name" value="PRK00753.1"/>
    <property type="match status" value="1"/>
</dbReference>
<dbReference type="Pfam" id="PF02419">
    <property type="entry name" value="PsbL"/>
    <property type="match status" value="1"/>
</dbReference>
<dbReference type="SUPFAM" id="SSF161017">
    <property type="entry name" value="Photosystem II reaction center protein L, PsbL"/>
    <property type="match status" value="1"/>
</dbReference>
<protein>
    <recommendedName>
        <fullName evidence="1">Photosystem II reaction center protein L</fullName>
        <shortName evidence="1">PSII-L</shortName>
    </recommendedName>
</protein>
<geneLocation type="plastid"/>
<sequence>MTQSNPNEQNVELNRTSLYWGLLLIFVLAVLFSNYFFN</sequence>
<organism>
    <name type="scientific">Cuscuta europaea</name>
    <name type="common">European dodder</name>
    <dbReference type="NCBI Taxonomy" id="41803"/>
    <lineage>
        <taxon>Eukaryota</taxon>
        <taxon>Viridiplantae</taxon>
        <taxon>Streptophyta</taxon>
        <taxon>Embryophyta</taxon>
        <taxon>Tracheophyta</taxon>
        <taxon>Spermatophyta</taxon>
        <taxon>Magnoliopsida</taxon>
        <taxon>eudicotyledons</taxon>
        <taxon>Gunneridae</taxon>
        <taxon>Pentapetalae</taxon>
        <taxon>asterids</taxon>
        <taxon>lamiids</taxon>
        <taxon>Solanales</taxon>
        <taxon>Convolvulaceae</taxon>
        <taxon>Cuscuteae</taxon>
        <taxon>Cuscuta</taxon>
        <taxon>Cuscuta subgen. Cuscuta</taxon>
    </lineage>
</organism>
<reference key="1">
    <citation type="journal article" date="2002" name="Am. J. Bot.">
        <title>Monophyly of the Convolvulaceae and circumscription of their major lineages based on DNA sequences of multiple chloroplast loci.</title>
        <authorList>
            <person name="Stefanovic S."/>
            <person name="Krueger L."/>
            <person name="Olmstead R.G."/>
        </authorList>
        <dbReference type="AGRICOLA" id="IND23320510"/>
    </citation>
    <scope>NUCLEOTIDE SEQUENCE [GENOMIC DNA]</scope>
</reference>
<gene>
    <name evidence="1" type="primary">psbL</name>
</gene>
<proteinExistence type="inferred from homology"/>